<proteinExistence type="inferred from homology"/>
<evidence type="ECO:0000250" key="1"/>
<evidence type="ECO:0000255" key="2">
    <source>
        <dbReference type="PROSITE-ProRule" id="PRU00711"/>
    </source>
</evidence>
<evidence type="ECO:0000305" key="3"/>
<keyword id="KW-0004">4Fe-4S</keyword>
<keyword id="KW-0028">Amino-acid biosynthesis</keyword>
<keyword id="KW-0285">Flavoprotein</keyword>
<keyword id="KW-0288">FMN</keyword>
<keyword id="KW-0314">Glutamate biosynthesis</keyword>
<keyword id="KW-0408">Iron</keyword>
<keyword id="KW-0411">Iron-sulfur</keyword>
<keyword id="KW-0479">Metal-binding</keyword>
<keyword id="KW-0521">NADP</keyword>
<keyword id="KW-0560">Oxidoreductase</keyword>
<keyword id="KW-1185">Reference proteome</keyword>
<keyword id="KW-0677">Repeat</keyword>
<sequence length="510" mass="55454">MIPSYVPPKYKVEVDPNRCMLCERCTIECSWGVYRREGDRIISYSNRCGACHRCVVMCPRDAITIKENAISWRSHPLWDVDARVDIYNQAKTGCILLSGMGNAKEHPIYFDKIVLDACQVTNPSIDPLREPMELRTYIGKKPKQLEFEFVEEEIDGKKIKKAKLKTKIAPNLKLDTPIMIAHMSYGALSLNAHLSFAKAVKECGTFMGTGEGGLPKALYPYADHIITQVASGRFGVNEEYLMKGSAIEIKIGQGAKPGIGGHLPGEKVTAEISATRMIPEGSDAISPAPHHDIYSIEDLAQLVRSLKEATRWKKPVFVKIAAVHNAPAIAVGIATSDADAVVIDGYKGGTGAAPKVFRDHVGIPIEMAIAAVDQRLREEGLRNEISIIASGGIRCSADVFKAIALGADAVYIGTAAMVALGCRVCGRCYTGLCAWGIATQRPELVKRLDPEVGARRVANLIKAWTHEIKELLGAAGINSIESLRGNRDRLRGVGLNEKELEVLGIKAAGE</sequence>
<name>AGLUS_METJA</name>
<accession>Q58746</accession>
<accession>Q4U2V1</accession>
<protein>
    <recommendedName>
        <fullName>Archaeal glutamate synthase [NADPH]</fullName>
        <ecNumber>1.4.1.13</ecNumber>
    </recommendedName>
    <alternativeName>
        <fullName>Archaeal NADPH-GOGAT</fullName>
    </alternativeName>
</protein>
<organism>
    <name type="scientific">Methanocaldococcus jannaschii (strain ATCC 43067 / DSM 2661 / JAL-1 / JCM 10045 / NBRC 100440)</name>
    <name type="common">Methanococcus jannaschii</name>
    <dbReference type="NCBI Taxonomy" id="243232"/>
    <lineage>
        <taxon>Archaea</taxon>
        <taxon>Methanobacteriati</taxon>
        <taxon>Methanobacteriota</taxon>
        <taxon>Methanomada group</taxon>
        <taxon>Methanococci</taxon>
        <taxon>Methanococcales</taxon>
        <taxon>Methanocaldococcaceae</taxon>
        <taxon>Methanocaldococcus</taxon>
    </lineage>
</organism>
<gene>
    <name type="ordered locus">MJ1351</name>
</gene>
<feature type="chain" id="PRO_0000170804" description="Archaeal glutamate synthase [NADPH]">
    <location>
        <begin position="1"/>
        <end position="510"/>
    </location>
</feature>
<feature type="domain" description="4Fe-4S ferredoxin-type 1" evidence="2">
    <location>
        <begin position="10"/>
        <end position="37"/>
    </location>
</feature>
<feature type="domain" description="4Fe-4S ferredoxin-type 2" evidence="2">
    <location>
        <begin position="38"/>
        <end position="68"/>
    </location>
</feature>
<feature type="binding site" evidence="1">
    <location>
        <position position="19"/>
    </location>
    <ligand>
        <name>[4Fe-4S] cluster</name>
        <dbReference type="ChEBI" id="CHEBI:49883"/>
        <label>1</label>
    </ligand>
</feature>
<feature type="binding site" evidence="1">
    <location>
        <position position="22"/>
    </location>
    <ligand>
        <name>[4Fe-4S] cluster</name>
        <dbReference type="ChEBI" id="CHEBI:49883"/>
        <label>1</label>
    </ligand>
</feature>
<feature type="binding site" evidence="1">
    <location>
        <position position="25"/>
    </location>
    <ligand>
        <name>[4Fe-4S] cluster</name>
        <dbReference type="ChEBI" id="CHEBI:49883"/>
        <label>1</label>
    </ligand>
</feature>
<feature type="binding site" evidence="1">
    <location>
        <position position="29"/>
    </location>
    <ligand>
        <name>[4Fe-4S] cluster</name>
        <dbReference type="ChEBI" id="CHEBI:49883"/>
        <label>2</label>
    </ligand>
</feature>
<feature type="binding site" evidence="1">
    <location>
        <position position="48"/>
    </location>
    <ligand>
        <name>[4Fe-4S] cluster</name>
        <dbReference type="ChEBI" id="CHEBI:49883"/>
        <label>2</label>
    </ligand>
</feature>
<feature type="binding site" evidence="1">
    <location>
        <position position="51"/>
    </location>
    <ligand>
        <name>[4Fe-4S] cluster</name>
        <dbReference type="ChEBI" id="CHEBI:49883"/>
        <label>2</label>
    </ligand>
</feature>
<feature type="binding site" evidence="1">
    <location>
        <position position="54"/>
    </location>
    <ligand>
        <name>[4Fe-4S] cluster</name>
        <dbReference type="ChEBI" id="CHEBI:49883"/>
        <label>2</label>
    </ligand>
</feature>
<feature type="binding site" evidence="1">
    <location>
        <position position="58"/>
    </location>
    <ligand>
        <name>[4Fe-4S] cluster</name>
        <dbReference type="ChEBI" id="CHEBI:49883"/>
        <label>1</label>
    </ligand>
</feature>
<dbReference type="EC" id="1.4.1.13"/>
<dbReference type="EMBL" id="DQ018115">
    <property type="protein sequence ID" value="AAY33887.1"/>
    <property type="molecule type" value="Genomic_DNA"/>
</dbReference>
<dbReference type="EMBL" id="L77117">
    <property type="protein sequence ID" value="AAB99362.1"/>
    <property type="molecule type" value="Genomic_DNA"/>
</dbReference>
<dbReference type="PIR" id="F64468">
    <property type="entry name" value="F64468"/>
</dbReference>
<dbReference type="RefSeq" id="WP_010870869.1">
    <property type="nucleotide sequence ID" value="NC_000909.1"/>
</dbReference>
<dbReference type="SMR" id="Q58746"/>
<dbReference type="FunCoup" id="Q58746">
    <property type="interactions" value="4"/>
</dbReference>
<dbReference type="STRING" id="243232.MJ_1351"/>
<dbReference type="PaxDb" id="243232-MJ_1351"/>
<dbReference type="EnsemblBacteria" id="AAB99362">
    <property type="protein sequence ID" value="AAB99362"/>
    <property type="gene ID" value="MJ_1351"/>
</dbReference>
<dbReference type="GeneID" id="1452254"/>
<dbReference type="KEGG" id="mja:MJ_1351"/>
<dbReference type="eggNOG" id="arCOG00619">
    <property type="taxonomic scope" value="Archaea"/>
</dbReference>
<dbReference type="HOGENOM" id="CLU_023342_1_1_2"/>
<dbReference type="InParanoid" id="Q58746"/>
<dbReference type="OrthoDB" id="2837at2157"/>
<dbReference type="PhylomeDB" id="Q58746"/>
<dbReference type="BRENDA" id="1.4.1.13">
    <property type="organism ID" value="3260"/>
</dbReference>
<dbReference type="Proteomes" id="UP000000805">
    <property type="component" value="Chromosome"/>
</dbReference>
<dbReference type="GO" id="GO:0051539">
    <property type="term" value="F:4 iron, 4 sulfur cluster binding"/>
    <property type="evidence" value="ECO:0007669"/>
    <property type="project" value="UniProtKB-KW"/>
</dbReference>
<dbReference type="GO" id="GO:0004355">
    <property type="term" value="F:glutamate synthase (NADPH) activity"/>
    <property type="evidence" value="ECO:0007669"/>
    <property type="project" value="UniProtKB-EC"/>
</dbReference>
<dbReference type="GO" id="GO:0046872">
    <property type="term" value="F:metal ion binding"/>
    <property type="evidence" value="ECO:0007669"/>
    <property type="project" value="UniProtKB-KW"/>
</dbReference>
<dbReference type="GO" id="GO:0006537">
    <property type="term" value="P:glutamate biosynthetic process"/>
    <property type="evidence" value="ECO:0007669"/>
    <property type="project" value="UniProtKB-KW"/>
</dbReference>
<dbReference type="CDD" id="cd02808">
    <property type="entry name" value="GltS_FMN"/>
    <property type="match status" value="1"/>
</dbReference>
<dbReference type="Gene3D" id="3.30.70.20">
    <property type="match status" value="1"/>
</dbReference>
<dbReference type="Gene3D" id="3.20.20.70">
    <property type="entry name" value="Aldolase class I"/>
    <property type="match status" value="1"/>
</dbReference>
<dbReference type="InterPro" id="IPR017896">
    <property type="entry name" value="4Fe4S_Fe-S-bd"/>
</dbReference>
<dbReference type="InterPro" id="IPR017900">
    <property type="entry name" value="4Fe4S_Fe_S_CS"/>
</dbReference>
<dbReference type="InterPro" id="IPR013785">
    <property type="entry name" value="Aldolase_TIM"/>
</dbReference>
<dbReference type="InterPro" id="IPR024188">
    <property type="entry name" value="GltB"/>
</dbReference>
<dbReference type="InterPro" id="IPR043578">
    <property type="entry name" value="GltB_archl_type"/>
</dbReference>
<dbReference type="InterPro" id="IPR002932">
    <property type="entry name" value="Glu_synthdom"/>
</dbReference>
<dbReference type="PANTHER" id="PTHR43819">
    <property type="entry name" value="ARCHAEAL-TYPE GLUTAMATE SYNTHASE [NADPH]"/>
    <property type="match status" value="1"/>
</dbReference>
<dbReference type="PANTHER" id="PTHR43819:SF1">
    <property type="entry name" value="ARCHAEAL-TYPE GLUTAMATE SYNTHASE [NADPH]"/>
    <property type="match status" value="1"/>
</dbReference>
<dbReference type="Pfam" id="PF01645">
    <property type="entry name" value="Glu_synthase"/>
    <property type="match status" value="1"/>
</dbReference>
<dbReference type="PIRSF" id="PIRSF500061">
    <property type="entry name" value="GOGAT_lg2_archl"/>
    <property type="match status" value="1"/>
</dbReference>
<dbReference type="PIRSF" id="PIRSF006429">
    <property type="entry name" value="GOGAT_lg_2"/>
    <property type="match status" value="1"/>
</dbReference>
<dbReference type="SUPFAM" id="SSF54862">
    <property type="entry name" value="4Fe-4S ferredoxins"/>
    <property type="match status" value="1"/>
</dbReference>
<dbReference type="SUPFAM" id="SSF51395">
    <property type="entry name" value="FMN-linked oxidoreductases"/>
    <property type="match status" value="1"/>
</dbReference>
<dbReference type="PROSITE" id="PS00198">
    <property type="entry name" value="4FE4S_FER_1"/>
    <property type="match status" value="1"/>
</dbReference>
<dbReference type="PROSITE" id="PS51379">
    <property type="entry name" value="4FE4S_FER_2"/>
    <property type="match status" value="2"/>
</dbReference>
<reference key="1">
    <citation type="submission" date="2005-04" db="EMBL/GenBank/DDBJ databases">
        <title>Putative FMN-binding domain of glutamate synthase.</title>
        <authorList>
            <person name="Dincturk H.B."/>
        </authorList>
    </citation>
    <scope>NUCLEOTIDE SEQUENCE [GENOMIC DNA]</scope>
</reference>
<reference key="2">
    <citation type="journal article" date="1996" name="Science">
        <title>Complete genome sequence of the methanogenic archaeon, Methanococcus jannaschii.</title>
        <authorList>
            <person name="Bult C.J."/>
            <person name="White O."/>
            <person name="Olsen G.J."/>
            <person name="Zhou L."/>
            <person name="Fleischmann R.D."/>
            <person name="Sutton G.G."/>
            <person name="Blake J.A."/>
            <person name="FitzGerald L.M."/>
            <person name="Clayton R.A."/>
            <person name="Gocayne J.D."/>
            <person name="Kerlavage A.R."/>
            <person name="Dougherty B.A."/>
            <person name="Tomb J.-F."/>
            <person name="Adams M.D."/>
            <person name="Reich C.I."/>
            <person name="Overbeek R."/>
            <person name="Kirkness E.F."/>
            <person name="Weinstock K.G."/>
            <person name="Merrick J.M."/>
            <person name="Glodek A."/>
            <person name="Scott J.L."/>
            <person name="Geoghagen N.S.M."/>
            <person name="Weidman J.F."/>
            <person name="Fuhrmann J.L."/>
            <person name="Nguyen D."/>
            <person name="Utterback T.R."/>
            <person name="Kelley J.M."/>
            <person name="Peterson J.D."/>
            <person name="Sadow P.W."/>
            <person name="Hanna M.C."/>
            <person name="Cotton M.D."/>
            <person name="Roberts K.M."/>
            <person name="Hurst M.A."/>
            <person name="Kaine B.P."/>
            <person name="Borodovsky M."/>
            <person name="Klenk H.-P."/>
            <person name="Fraser C.M."/>
            <person name="Smith H.O."/>
            <person name="Woese C.R."/>
            <person name="Venter J.C."/>
        </authorList>
    </citation>
    <scope>NUCLEOTIDE SEQUENCE [LARGE SCALE GENOMIC DNA]</scope>
    <source>
        <strain>ATCC 43067 / DSM 2661 / JAL-1 / JCM 10045 / NBRC 100440</strain>
    </source>
</reference>
<comment type="catalytic activity">
    <reaction>
        <text>2 L-glutamate + NADP(+) = L-glutamine + 2-oxoglutarate + NADPH + H(+)</text>
        <dbReference type="Rhea" id="RHEA:15501"/>
        <dbReference type="ChEBI" id="CHEBI:15378"/>
        <dbReference type="ChEBI" id="CHEBI:16810"/>
        <dbReference type="ChEBI" id="CHEBI:29985"/>
        <dbReference type="ChEBI" id="CHEBI:57783"/>
        <dbReference type="ChEBI" id="CHEBI:58349"/>
        <dbReference type="ChEBI" id="CHEBI:58359"/>
        <dbReference type="EC" id="1.4.1.13"/>
    </reaction>
</comment>
<comment type="cofactor">
    <cofactor evidence="1">
        <name>FMN</name>
        <dbReference type="ChEBI" id="CHEBI:58210"/>
    </cofactor>
</comment>
<comment type="similarity">
    <text evidence="3">Belongs to the glutamate synthase family.</text>
</comment>